<reference key="1">
    <citation type="journal article" date="2010" name="BMC Genomics">
        <title>Salmo salar and Esox lucius full-length cDNA sequences reveal changes in evolutionary pressures on a post-tetraploidization genome.</title>
        <authorList>
            <person name="Leong J.S."/>
            <person name="Jantzen S.G."/>
            <person name="von Schalburg K.R."/>
            <person name="Cooper G.A."/>
            <person name="Messmer A.M."/>
            <person name="Liao N.Y."/>
            <person name="Munro S."/>
            <person name="Moore R."/>
            <person name="Holt R.A."/>
            <person name="Jones S.J."/>
            <person name="Davidson W.S."/>
            <person name="Koop B.F."/>
        </authorList>
    </citation>
    <scope>NUCLEOTIDE SEQUENCE [LARGE SCALE MRNA]</scope>
    <source>
        <tissue>Brain</tissue>
    </source>
</reference>
<comment type="function">
    <text evidence="1">Component of the purine nucleotide cycle (PNC), which interconverts IMP and AMP to regulate the nucleotide levels in various tissues, and which contributes to glycolysis and ammoniagenesis. Catalyzes the first committed step in the biosynthesis of AMP from IMP (By similarity).</text>
</comment>
<comment type="catalytic activity">
    <reaction evidence="2">
        <text>IMP + L-aspartate + GTP = N(6)-(1,2-dicarboxyethyl)-AMP + GDP + phosphate + 2 H(+)</text>
        <dbReference type="Rhea" id="RHEA:15753"/>
        <dbReference type="ChEBI" id="CHEBI:15378"/>
        <dbReference type="ChEBI" id="CHEBI:29991"/>
        <dbReference type="ChEBI" id="CHEBI:37565"/>
        <dbReference type="ChEBI" id="CHEBI:43474"/>
        <dbReference type="ChEBI" id="CHEBI:57567"/>
        <dbReference type="ChEBI" id="CHEBI:58053"/>
        <dbReference type="ChEBI" id="CHEBI:58189"/>
        <dbReference type="EC" id="6.3.4.4"/>
    </reaction>
</comment>
<comment type="cofactor">
    <cofactor evidence="2">
        <name>Mg(2+)</name>
        <dbReference type="ChEBI" id="CHEBI:18420"/>
    </cofactor>
    <text evidence="2">Binds 1 Mg(2+) ion per subunit.</text>
</comment>
<comment type="pathway">
    <text evidence="2">Purine metabolism; AMP biosynthesis via de novo pathway; AMP from IMP: step 1/2.</text>
</comment>
<comment type="subunit">
    <text evidence="2">Homodimer.</text>
</comment>
<comment type="subcellular location">
    <subcellularLocation>
        <location evidence="2">Cytoplasm</location>
    </subcellularLocation>
</comment>
<comment type="similarity">
    <text evidence="2">Belongs to the adenylosuccinate synthetase family.</text>
</comment>
<evidence type="ECO:0000250" key="1"/>
<evidence type="ECO:0000255" key="2">
    <source>
        <dbReference type="HAMAP-Rule" id="MF_03126"/>
    </source>
</evidence>
<evidence type="ECO:0000256" key="3">
    <source>
        <dbReference type="SAM" id="MobiDB-lite"/>
    </source>
</evidence>
<protein>
    <recommendedName>
        <fullName evidence="2">Adenylosuccinate synthetase isozyme 1 A</fullName>
        <shortName evidence="2">AMPSase 1 A</shortName>
        <shortName evidence="2">AdSS 1 A</shortName>
        <ecNumber evidence="2">6.3.4.4</ecNumber>
    </recommendedName>
    <alternativeName>
        <fullName evidence="2">Adenylosuccinate synthetase, basic isozyme A</fullName>
    </alternativeName>
    <alternativeName>
        <fullName evidence="2">Adenylosuccinate synthetase, muscle isozyme A</fullName>
        <shortName evidence="2">M-type adenylosuccinate synthetase A</shortName>
    </alternativeName>
    <alternativeName>
        <fullName evidence="2">IMP--aspartate ligase 1 A</fullName>
    </alternativeName>
</protein>
<dbReference type="EC" id="6.3.4.4" evidence="2"/>
<dbReference type="EMBL" id="BT045409">
    <property type="protein sequence ID" value="ACI33671.1"/>
    <property type="molecule type" value="mRNA"/>
</dbReference>
<dbReference type="RefSeq" id="NP_001133669.1">
    <property type="nucleotide sequence ID" value="NM_001140197.1"/>
</dbReference>
<dbReference type="SMR" id="B5X2Z0"/>
<dbReference type="Ensembl" id="ENSSSAT00070035447">
    <property type="protein sequence ID" value="ENSSSAP00070033763"/>
    <property type="gene ID" value="ENSSSAG00070022206"/>
</dbReference>
<dbReference type="GeneID" id="100195168"/>
<dbReference type="KEGG" id="sasa:100195168"/>
<dbReference type="CTD" id="100195168"/>
<dbReference type="OrthoDB" id="113485at7898"/>
<dbReference type="UniPathway" id="UPA00075">
    <property type="reaction ID" value="UER00335"/>
</dbReference>
<dbReference type="Proteomes" id="UP000087266">
    <property type="component" value="Chromosome ssa15"/>
</dbReference>
<dbReference type="Bgee" id="ENSSSAG00000045538">
    <property type="expression patterns" value="Expressed in muscle tissue and 22 other cell types or tissues"/>
</dbReference>
<dbReference type="GO" id="GO:0005737">
    <property type="term" value="C:cytoplasm"/>
    <property type="evidence" value="ECO:0007669"/>
    <property type="project" value="UniProtKB-SubCell"/>
</dbReference>
<dbReference type="GO" id="GO:0004019">
    <property type="term" value="F:adenylosuccinate synthase activity"/>
    <property type="evidence" value="ECO:0007669"/>
    <property type="project" value="UniProtKB-UniRule"/>
</dbReference>
<dbReference type="GO" id="GO:0005525">
    <property type="term" value="F:GTP binding"/>
    <property type="evidence" value="ECO:0007669"/>
    <property type="project" value="UniProtKB-UniRule"/>
</dbReference>
<dbReference type="GO" id="GO:0000287">
    <property type="term" value="F:magnesium ion binding"/>
    <property type="evidence" value="ECO:0007669"/>
    <property type="project" value="UniProtKB-UniRule"/>
</dbReference>
<dbReference type="GO" id="GO:0044208">
    <property type="term" value="P:'de novo' AMP biosynthetic process"/>
    <property type="evidence" value="ECO:0007669"/>
    <property type="project" value="UniProtKB-UniRule"/>
</dbReference>
<dbReference type="GO" id="GO:0046040">
    <property type="term" value="P:IMP metabolic process"/>
    <property type="evidence" value="ECO:0007669"/>
    <property type="project" value="TreeGrafter"/>
</dbReference>
<dbReference type="CDD" id="cd03108">
    <property type="entry name" value="AdSS"/>
    <property type="match status" value="1"/>
</dbReference>
<dbReference type="FunFam" id="3.90.170.10:FF:000001">
    <property type="entry name" value="Adenylosuccinate synthetase"/>
    <property type="match status" value="1"/>
</dbReference>
<dbReference type="FunFam" id="1.10.300.10:FF:000002">
    <property type="entry name" value="Adenylosuccinate synthetase, chloroplastic"/>
    <property type="match status" value="1"/>
</dbReference>
<dbReference type="Gene3D" id="3.40.440.10">
    <property type="entry name" value="Adenylosuccinate Synthetase, subunit A, domain 1"/>
    <property type="match status" value="1"/>
</dbReference>
<dbReference type="Gene3D" id="1.10.300.10">
    <property type="entry name" value="Adenylosuccinate Synthetase, subunit A, domain 2"/>
    <property type="match status" value="1"/>
</dbReference>
<dbReference type="Gene3D" id="3.90.170.10">
    <property type="entry name" value="Adenylosuccinate Synthetase, subunit A, domain 3"/>
    <property type="match status" value="1"/>
</dbReference>
<dbReference type="HAMAP" id="MF_00011">
    <property type="entry name" value="Adenylosucc_synth"/>
    <property type="match status" value="1"/>
</dbReference>
<dbReference type="HAMAP" id="MF_03126">
    <property type="entry name" value="Adenylosucc_synth_vert_basic"/>
    <property type="match status" value="1"/>
</dbReference>
<dbReference type="InterPro" id="IPR018220">
    <property type="entry name" value="Adenylosuccin_syn_GTP-bd"/>
</dbReference>
<dbReference type="InterPro" id="IPR033128">
    <property type="entry name" value="Adenylosuccin_syn_Lys_AS"/>
</dbReference>
<dbReference type="InterPro" id="IPR042109">
    <property type="entry name" value="Adenylosuccinate_synth_dom1"/>
</dbReference>
<dbReference type="InterPro" id="IPR042110">
    <property type="entry name" value="Adenylosuccinate_synth_dom2"/>
</dbReference>
<dbReference type="InterPro" id="IPR042111">
    <property type="entry name" value="Adenylosuccinate_synth_dom3"/>
</dbReference>
<dbReference type="InterPro" id="IPR001114">
    <property type="entry name" value="Adenylosuccinate_synthetase"/>
</dbReference>
<dbReference type="InterPro" id="IPR027509">
    <property type="entry name" value="AdSS_1_vert"/>
</dbReference>
<dbReference type="InterPro" id="IPR027417">
    <property type="entry name" value="P-loop_NTPase"/>
</dbReference>
<dbReference type="NCBIfam" id="NF002223">
    <property type="entry name" value="PRK01117.1"/>
    <property type="match status" value="1"/>
</dbReference>
<dbReference type="NCBIfam" id="TIGR00184">
    <property type="entry name" value="purA"/>
    <property type="match status" value="1"/>
</dbReference>
<dbReference type="PANTHER" id="PTHR11846">
    <property type="entry name" value="ADENYLOSUCCINATE SYNTHETASE"/>
    <property type="match status" value="1"/>
</dbReference>
<dbReference type="PANTHER" id="PTHR11846:SF2">
    <property type="entry name" value="ADENYLOSUCCINATE SYNTHETASE ISOZYME 1"/>
    <property type="match status" value="1"/>
</dbReference>
<dbReference type="Pfam" id="PF00709">
    <property type="entry name" value="Adenylsucc_synt"/>
    <property type="match status" value="1"/>
</dbReference>
<dbReference type="SMART" id="SM00788">
    <property type="entry name" value="Adenylsucc_synt"/>
    <property type="match status" value="1"/>
</dbReference>
<dbReference type="SUPFAM" id="SSF52540">
    <property type="entry name" value="P-loop containing nucleoside triphosphate hydrolases"/>
    <property type="match status" value="1"/>
</dbReference>
<dbReference type="PROSITE" id="PS01266">
    <property type="entry name" value="ADENYLOSUCCIN_SYN_1"/>
    <property type="match status" value="1"/>
</dbReference>
<dbReference type="PROSITE" id="PS00513">
    <property type="entry name" value="ADENYLOSUCCIN_SYN_2"/>
    <property type="match status" value="1"/>
</dbReference>
<gene>
    <name type="primary">adss1a</name>
    <name type="synonym">adssl1a</name>
</gene>
<proteinExistence type="evidence at transcript level"/>
<name>PUA1A_SALSA</name>
<feature type="chain" id="PRO_0000398888" description="Adenylosuccinate synthetase isozyme 1 A">
    <location>
        <begin position="1"/>
        <end position="449"/>
    </location>
</feature>
<feature type="region of interest" description="Disordered" evidence="3">
    <location>
        <begin position="1"/>
        <end position="22"/>
    </location>
</feature>
<feature type="compositionally biased region" description="Polar residues" evidence="3">
    <location>
        <begin position="1"/>
        <end position="10"/>
    </location>
</feature>
<feature type="active site" description="Proton acceptor" evidence="2">
    <location>
        <position position="35"/>
    </location>
</feature>
<feature type="active site" description="Proton donor" evidence="2">
    <location>
        <position position="63"/>
    </location>
</feature>
<feature type="binding site" evidence="2">
    <location>
        <begin position="34"/>
        <end position="40"/>
    </location>
    <ligand>
        <name>GTP</name>
        <dbReference type="ChEBI" id="CHEBI:37565"/>
    </ligand>
</feature>
<feature type="binding site" description="in other chain" evidence="2">
    <location>
        <begin position="35"/>
        <end position="38"/>
    </location>
    <ligand>
        <name>IMP</name>
        <dbReference type="ChEBI" id="CHEBI:58053"/>
        <note>ligand shared between dimeric partners</note>
    </ligand>
</feature>
<feature type="binding site" evidence="2">
    <location>
        <position position="35"/>
    </location>
    <ligand>
        <name>Mg(2+)</name>
        <dbReference type="ChEBI" id="CHEBI:18420"/>
    </ligand>
</feature>
<feature type="binding site" evidence="2">
    <location>
        <position position="35"/>
    </location>
    <ligand>
        <name>substrate</name>
    </ligand>
</feature>
<feature type="binding site" description="in other chain" evidence="2">
    <location>
        <begin position="60"/>
        <end position="63"/>
    </location>
    <ligand>
        <name>IMP</name>
        <dbReference type="ChEBI" id="CHEBI:58053"/>
        <note>ligand shared between dimeric partners</note>
    </ligand>
</feature>
<feature type="binding site" evidence="2">
    <location>
        <begin position="62"/>
        <end position="64"/>
    </location>
    <ligand>
        <name>GTP</name>
        <dbReference type="ChEBI" id="CHEBI:37565"/>
    </ligand>
</feature>
<feature type="binding site" evidence="2">
    <location>
        <position position="62"/>
    </location>
    <ligand>
        <name>Mg(2+)</name>
        <dbReference type="ChEBI" id="CHEBI:18420"/>
    </ligand>
</feature>
<feature type="binding site" description="in other chain" evidence="2">
    <location>
        <position position="155"/>
    </location>
    <ligand>
        <name>IMP</name>
        <dbReference type="ChEBI" id="CHEBI:58053"/>
        <note>ligand shared between dimeric partners</note>
    </ligand>
</feature>
<feature type="binding site" evidence="2">
    <location>
        <position position="169"/>
    </location>
    <ligand>
        <name>IMP</name>
        <dbReference type="ChEBI" id="CHEBI:58053"/>
        <note>ligand shared between dimeric partners</note>
    </ligand>
</feature>
<feature type="binding site" description="in other chain" evidence="2">
    <location>
        <position position="248"/>
    </location>
    <ligand>
        <name>IMP</name>
        <dbReference type="ChEBI" id="CHEBI:58053"/>
        <note>ligand shared between dimeric partners</note>
    </ligand>
</feature>
<feature type="binding site" description="in other chain" evidence="2">
    <location>
        <position position="263"/>
    </location>
    <ligand>
        <name>IMP</name>
        <dbReference type="ChEBI" id="CHEBI:58053"/>
        <note>ligand shared between dimeric partners</note>
    </ligand>
</feature>
<feature type="binding site" evidence="2">
    <location>
        <begin position="323"/>
        <end position="329"/>
    </location>
    <ligand>
        <name>substrate</name>
    </ligand>
</feature>
<feature type="binding site" description="in other chain" evidence="2">
    <location>
        <position position="327"/>
    </location>
    <ligand>
        <name>IMP</name>
        <dbReference type="ChEBI" id="CHEBI:58053"/>
        <note>ligand shared between dimeric partners</note>
    </ligand>
</feature>
<feature type="binding site" evidence="2">
    <location>
        <position position="329"/>
    </location>
    <ligand>
        <name>GTP</name>
        <dbReference type="ChEBI" id="CHEBI:37565"/>
    </ligand>
</feature>
<feature type="binding site" evidence="2">
    <location>
        <begin position="355"/>
        <end position="357"/>
    </location>
    <ligand>
        <name>GTP</name>
        <dbReference type="ChEBI" id="CHEBI:37565"/>
    </ligand>
</feature>
<feature type="binding site" evidence="2">
    <location>
        <begin position="437"/>
        <end position="440"/>
    </location>
    <ligand>
        <name>GTP</name>
        <dbReference type="ChEBI" id="CHEBI:37565"/>
    </ligand>
</feature>
<sequence>MSHKSCYTNPGTGGKRPRNDKGNKVTVVLGAQWGDEGKGKVVDLLATESDIICRCQGGNNAGHTVVVDGMEYDFHLLPSGIINSKAVSVIGNGVVIHLPGLLEEAEKNEKKGLKDWEKRLIISDRAHIVFDFHQAVDGLQEVQRQAQDGKNIGTTKKGIGPTYSSKASRTGLRICDLLDDFKEFSTRFKNLAQQYQAMFPTLVVDVEGQLKKLKEYAERIRPMVRDGVYFMYDAINGPPKKILVEGANAALLDIDFGTYPFVTSSNCTVGGVCTGLGIPPLNIGDVYGVVKAYTTRVGIGAFPTEQLNEVGELLQTRGHEVGVTTGRKRRCGWLDLVILRYANMINGFTAFALTKLDILDVMDEIKVGVSYKLKGKKIPYFPANMDVLQKVEVEYEKLPGWKSDTSACRKWEDLPVKAQNYVRFVENHVGVPIKWVGVGKARESMIQMF</sequence>
<organism>
    <name type="scientific">Salmo salar</name>
    <name type="common">Atlantic salmon</name>
    <dbReference type="NCBI Taxonomy" id="8030"/>
    <lineage>
        <taxon>Eukaryota</taxon>
        <taxon>Metazoa</taxon>
        <taxon>Chordata</taxon>
        <taxon>Craniata</taxon>
        <taxon>Vertebrata</taxon>
        <taxon>Euteleostomi</taxon>
        <taxon>Actinopterygii</taxon>
        <taxon>Neopterygii</taxon>
        <taxon>Teleostei</taxon>
        <taxon>Protacanthopterygii</taxon>
        <taxon>Salmoniformes</taxon>
        <taxon>Salmonidae</taxon>
        <taxon>Salmoninae</taxon>
        <taxon>Salmo</taxon>
    </lineage>
</organism>
<accession>B5X2Z0</accession>
<keyword id="KW-0963">Cytoplasm</keyword>
<keyword id="KW-0342">GTP-binding</keyword>
<keyword id="KW-0436">Ligase</keyword>
<keyword id="KW-0460">Magnesium</keyword>
<keyword id="KW-0479">Metal-binding</keyword>
<keyword id="KW-0547">Nucleotide-binding</keyword>
<keyword id="KW-0658">Purine biosynthesis</keyword>
<keyword id="KW-1185">Reference proteome</keyword>